<accession>A6UCW1</accession>
<reference key="1">
    <citation type="submission" date="2007-06" db="EMBL/GenBank/DDBJ databases">
        <title>Complete sequence of Sinorhizobium medicae WSM419 chromosome.</title>
        <authorList>
            <consortium name="US DOE Joint Genome Institute"/>
            <person name="Copeland A."/>
            <person name="Lucas S."/>
            <person name="Lapidus A."/>
            <person name="Barry K."/>
            <person name="Glavina del Rio T."/>
            <person name="Dalin E."/>
            <person name="Tice H."/>
            <person name="Pitluck S."/>
            <person name="Chain P."/>
            <person name="Malfatti S."/>
            <person name="Shin M."/>
            <person name="Vergez L."/>
            <person name="Schmutz J."/>
            <person name="Larimer F."/>
            <person name="Land M."/>
            <person name="Hauser L."/>
            <person name="Kyrpides N."/>
            <person name="Mikhailova N."/>
            <person name="Reeve W.G."/>
            <person name="Richardson P."/>
        </authorList>
    </citation>
    <scope>NUCLEOTIDE SEQUENCE [LARGE SCALE GENOMIC DNA]</scope>
    <source>
        <strain>WSM419</strain>
    </source>
</reference>
<dbReference type="EMBL" id="CP000738">
    <property type="protein sequence ID" value="ABR61491.1"/>
    <property type="molecule type" value="Genomic_DNA"/>
</dbReference>
<dbReference type="RefSeq" id="WP_010970183.1">
    <property type="nucleotide sequence ID" value="NC_009636.1"/>
</dbReference>
<dbReference type="RefSeq" id="YP_001328326.1">
    <property type="nucleotide sequence ID" value="NC_009636.1"/>
</dbReference>
<dbReference type="SMR" id="A6UCW1"/>
<dbReference type="STRING" id="366394.Smed_2661"/>
<dbReference type="GeneID" id="89577190"/>
<dbReference type="KEGG" id="smd:Smed_2661"/>
<dbReference type="PATRIC" id="fig|366394.8.peg.5862"/>
<dbReference type="eggNOG" id="COG0254">
    <property type="taxonomic scope" value="Bacteria"/>
</dbReference>
<dbReference type="HOGENOM" id="CLU_114306_3_2_5"/>
<dbReference type="OrthoDB" id="9803251at2"/>
<dbReference type="Proteomes" id="UP000001108">
    <property type="component" value="Chromosome"/>
</dbReference>
<dbReference type="GO" id="GO:1990904">
    <property type="term" value="C:ribonucleoprotein complex"/>
    <property type="evidence" value="ECO:0007669"/>
    <property type="project" value="UniProtKB-KW"/>
</dbReference>
<dbReference type="GO" id="GO:0005840">
    <property type="term" value="C:ribosome"/>
    <property type="evidence" value="ECO:0007669"/>
    <property type="project" value="UniProtKB-KW"/>
</dbReference>
<dbReference type="GO" id="GO:0019843">
    <property type="term" value="F:rRNA binding"/>
    <property type="evidence" value="ECO:0007669"/>
    <property type="project" value="UniProtKB-KW"/>
</dbReference>
<dbReference type="GO" id="GO:0003735">
    <property type="term" value="F:structural constituent of ribosome"/>
    <property type="evidence" value="ECO:0007669"/>
    <property type="project" value="InterPro"/>
</dbReference>
<dbReference type="GO" id="GO:0006412">
    <property type="term" value="P:translation"/>
    <property type="evidence" value="ECO:0007669"/>
    <property type="project" value="UniProtKB-UniRule"/>
</dbReference>
<dbReference type="Gene3D" id="4.10.830.30">
    <property type="entry name" value="Ribosomal protein L31"/>
    <property type="match status" value="1"/>
</dbReference>
<dbReference type="HAMAP" id="MF_00501">
    <property type="entry name" value="Ribosomal_bL31_1"/>
    <property type="match status" value="1"/>
</dbReference>
<dbReference type="InterPro" id="IPR034704">
    <property type="entry name" value="Ribosomal_bL28/bL31-like_sf"/>
</dbReference>
<dbReference type="InterPro" id="IPR002150">
    <property type="entry name" value="Ribosomal_bL31"/>
</dbReference>
<dbReference type="InterPro" id="IPR027491">
    <property type="entry name" value="Ribosomal_bL31_A"/>
</dbReference>
<dbReference type="InterPro" id="IPR042105">
    <property type="entry name" value="Ribosomal_bL31_sf"/>
</dbReference>
<dbReference type="NCBIfam" id="TIGR00105">
    <property type="entry name" value="L31"/>
    <property type="match status" value="1"/>
</dbReference>
<dbReference type="NCBIfam" id="NF001809">
    <property type="entry name" value="PRK00528.1"/>
    <property type="match status" value="1"/>
</dbReference>
<dbReference type="PANTHER" id="PTHR33280">
    <property type="entry name" value="50S RIBOSOMAL PROTEIN L31, CHLOROPLASTIC"/>
    <property type="match status" value="1"/>
</dbReference>
<dbReference type="PANTHER" id="PTHR33280:SF6">
    <property type="entry name" value="LARGE RIBOSOMAL SUBUNIT PROTEIN BL31A"/>
    <property type="match status" value="1"/>
</dbReference>
<dbReference type="Pfam" id="PF01197">
    <property type="entry name" value="Ribosomal_L31"/>
    <property type="match status" value="1"/>
</dbReference>
<dbReference type="PRINTS" id="PR01249">
    <property type="entry name" value="RIBOSOMALL31"/>
</dbReference>
<dbReference type="SUPFAM" id="SSF143800">
    <property type="entry name" value="L28p-like"/>
    <property type="match status" value="1"/>
</dbReference>
<dbReference type="PROSITE" id="PS01143">
    <property type="entry name" value="RIBOSOMAL_L31"/>
    <property type="match status" value="1"/>
</dbReference>
<keyword id="KW-0687">Ribonucleoprotein</keyword>
<keyword id="KW-0689">Ribosomal protein</keyword>
<keyword id="KW-0694">RNA-binding</keyword>
<keyword id="KW-0699">rRNA-binding</keyword>
<comment type="function">
    <text evidence="1">Binds the 23S rRNA.</text>
</comment>
<comment type="subunit">
    <text evidence="1">Part of the 50S ribosomal subunit.</text>
</comment>
<comment type="similarity">
    <text evidence="1">Belongs to the bacterial ribosomal protein bL31 family. Type A subfamily.</text>
</comment>
<name>RL31_SINMW</name>
<proteinExistence type="inferred from homology"/>
<evidence type="ECO:0000255" key="1">
    <source>
        <dbReference type="HAMAP-Rule" id="MF_00501"/>
    </source>
</evidence>
<evidence type="ECO:0000305" key="2"/>
<feature type="chain" id="PRO_1000126741" description="Large ribosomal subunit protein bL31">
    <location>
        <begin position="1"/>
        <end position="73"/>
    </location>
</feature>
<protein>
    <recommendedName>
        <fullName evidence="1">Large ribosomal subunit protein bL31</fullName>
    </recommendedName>
    <alternativeName>
        <fullName evidence="2">50S ribosomal protein L31</fullName>
    </alternativeName>
</protein>
<gene>
    <name evidence="1" type="primary">rpmE</name>
    <name type="ordered locus">Smed_2661</name>
</gene>
<organism>
    <name type="scientific">Sinorhizobium medicae (strain WSM419)</name>
    <name type="common">Ensifer medicae</name>
    <dbReference type="NCBI Taxonomy" id="366394"/>
    <lineage>
        <taxon>Bacteria</taxon>
        <taxon>Pseudomonadati</taxon>
        <taxon>Pseudomonadota</taxon>
        <taxon>Alphaproteobacteria</taxon>
        <taxon>Hyphomicrobiales</taxon>
        <taxon>Rhizobiaceae</taxon>
        <taxon>Sinorhizobium/Ensifer group</taxon>
        <taxon>Sinorhizobium</taxon>
    </lineage>
</organism>
<sequence>MKADIHPDYHTIKVVMTDGTEYETRSTWGTEGATMNLEIDPKSHPAWTGGNQQLVDRGGRVSKFKKRFEGLGL</sequence>